<comment type="function">
    <text evidence="1">DNA-dependent RNA polymerase catalyzes the transcription of DNA into RNA using the four ribonucleoside triphosphates as substrates.</text>
</comment>
<comment type="catalytic activity">
    <reaction evidence="1">
        <text>RNA(n) + a ribonucleoside 5'-triphosphate = RNA(n+1) + diphosphate</text>
        <dbReference type="Rhea" id="RHEA:21248"/>
        <dbReference type="Rhea" id="RHEA-COMP:14527"/>
        <dbReference type="Rhea" id="RHEA-COMP:17342"/>
        <dbReference type="ChEBI" id="CHEBI:33019"/>
        <dbReference type="ChEBI" id="CHEBI:61557"/>
        <dbReference type="ChEBI" id="CHEBI:140395"/>
        <dbReference type="EC" id="2.7.7.6"/>
    </reaction>
</comment>
<comment type="subunit">
    <text evidence="1">Homodimer. The RNAP catalytic core consists of 2 alpha, 1 beta, 1 beta' and 1 omega subunit. When a sigma factor is associated with the core the holoenzyme is formed, which can initiate transcription.</text>
</comment>
<comment type="domain">
    <text evidence="1">The N-terminal domain is essential for RNAP assembly and basal transcription, whereas the C-terminal domain is involved in interaction with transcriptional regulators and with upstream promoter elements.</text>
</comment>
<comment type="similarity">
    <text evidence="1">Belongs to the RNA polymerase alpha chain family.</text>
</comment>
<proteinExistence type="inferred from homology"/>
<reference key="1">
    <citation type="journal article" date="2007" name="PLoS ONE">
        <title>The complete genome sequence and analysis of the Epsilonproteobacterium Arcobacter butzleri.</title>
        <authorList>
            <person name="Miller W.G."/>
            <person name="Parker C.T."/>
            <person name="Rubenfield M."/>
            <person name="Mendz G.L."/>
            <person name="Woesten M.M.S.M."/>
            <person name="Ussery D.W."/>
            <person name="Stolz J.F."/>
            <person name="Binnewies T.T."/>
            <person name="Hallin P.F."/>
            <person name="Wang G."/>
            <person name="Malek J.A."/>
            <person name="Rogosin A."/>
            <person name="Stanker L.H."/>
            <person name="Mandrell R.E."/>
        </authorList>
    </citation>
    <scope>NUCLEOTIDE SEQUENCE [LARGE SCALE GENOMIC DNA]</scope>
    <source>
        <strain>RM4018</strain>
    </source>
</reference>
<keyword id="KW-0240">DNA-directed RNA polymerase</keyword>
<keyword id="KW-0548">Nucleotidyltransferase</keyword>
<keyword id="KW-1185">Reference proteome</keyword>
<keyword id="KW-0804">Transcription</keyword>
<keyword id="KW-0808">Transferase</keyword>
<organism>
    <name type="scientific">Aliarcobacter butzleri (strain RM4018)</name>
    <name type="common">Arcobacter butzleri</name>
    <dbReference type="NCBI Taxonomy" id="367737"/>
    <lineage>
        <taxon>Bacteria</taxon>
        <taxon>Pseudomonadati</taxon>
        <taxon>Campylobacterota</taxon>
        <taxon>Epsilonproteobacteria</taxon>
        <taxon>Campylobacterales</taxon>
        <taxon>Arcobacteraceae</taxon>
        <taxon>Aliarcobacter</taxon>
    </lineage>
</organism>
<gene>
    <name evidence="1" type="primary">rpoA</name>
    <name type="ordered locus">Abu_1020</name>
</gene>
<dbReference type="EC" id="2.7.7.6" evidence="1"/>
<dbReference type="EMBL" id="CP000361">
    <property type="protein sequence ID" value="ABV67280.1"/>
    <property type="molecule type" value="Genomic_DNA"/>
</dbReference>
<dbReference type="RefSeq" id="WP_004509209.1">
    <property type="nucleotide sequence ID" value="NC_009850.1"/>
</dbReference>
<dbReference type="SMR" id="A8ETK6"/>
<dbReference type="STRING" id="367737.Abu_1020"/>
<dbReference type="GeneID" id="24303494"/>
<dbReference type="KEGG" id="abu:Abu_1020"/>
<dbReference type="eggNOG" id="COG0202">
    <property type="taxonomic scope" value="Bacteria"/>
</dbReference>
<dbReference type="HOGENOM" id="CLU_053084_0_1_7"/>
<dbReference type="Proteomes" id="UP000001136">
    <property type="component" value="Chromosome"/>
</dbReference>
<dbReference type="GO" id="GO:0005737">
    <property type="term" value="C:cytoplasm"/>
    <property type="evidence" value="ECO:0007669"/>
    <property type="project" value="UniProtKB-ARBA"/>
</dbReference>
<dbReference type="GO" id="GO:0000428">
    <property type="term" value="C:DNA-directed RNA polymerase complex"/>
    <property type="evidence" value="ECO:0007669"/>
    <property type="project" value="UniProtKB-KW"/>
</dbReference>
<dbReference type="GO" id="GO:0003677">
    <property type="term" value="F:DNA binding"/>
    <property type="evidence" value="ECO:0007669"/>
    <property type="project" value="UniProtKB-UniRule"/>
</dbReference>
<dbReference type="GO" id="GO:0003899">
    <property type="term" value="F:DNA-directed RNA polymerase activity"/>
    <property type="evidence" value="ECO:0007669"/>
    <property type="project" value="UniProtKB-UniRule"/>
</dbReference>
<dbReference type="GO" id="GO:0046983">
    <property type="term" value="F:protein dimerization activity"/>
    <property type="evidence" value="ECO:0007669"/>
    <property type="project" value="InterPro"/>
</dbReference>
<dbReference type="GO" id="GO:0006351">
    <property type="term" value="P:DNA-templated transcription"/>
    <property type="evidence" value="ECO:0007669"/>
    <property type="project" value="UniProtKB-UniRule"/>
</dbReference>
<dbReference type="CDD" id="cd06928">
    <property type="entry name" value="RNAP_alpha_NTD"/>
    <property type="match status" value="1"/>
</dbReference>
<dbReference type="Gene3D" id="1.10.150.20">
    <property type="entry name" value="5' to 3' exonuclease, C-terminal subdomain"/>
    <property type="match status" value="1"/>
</dbReference>
<dbReference type="Gene3D" id="2.170.120.12">
    <property type="entry name" value="DNA-directed RNA polymerase, insert domain"/>
    <property type="match status" value="1"/>
</dbReference>
<dbReference type="Gene3D" id="3.30.1360.10">
    <property type="entry name" value="RNA polymerase, RBP11-like subunit"/>
    <property type="match status" value="1"/>
</dbReference>
<dbReference type="HAMAP" id="MF_00059">
    <property type="entry name" value="RNApol_bact_RpoA"/>
    <property type="match status" value="1"/>
</dbReference>
<dbReference type="InterPro" id="IPR011262">
    <property type="entry name" value="DNA-dir_RNA_pol_insert"/>
</dbReference>
<dbReference type="InterPro" id="IPR011263">
    <property type="entry name" value="DNA-dir_RNA_pol_RpoA/D/Rpb3"/>
</dbReference>
<dbReference type="InterPro" id="IPR011773">
    <property type="entry name" value="DNA-dir_RpoA"/>
</dbReference>
<dbReference type="InterPro" id="IPR036603">
    <property type="entry name" value="RBP11-like"/>
</dbReference>
<dbReference type="InterPro" id="IPR011260">
    <property type="entry name" value="RNAP_asu_C"/>
</dbReference>
<dbReference type="InterPro" id="IPR036643">
    <property type="entry name" value="RNApol_insert_sf"/>
</dbReference>
<dbReference type="NCBIfam" id="NF003517">
    <property type="entry name" value="PRK05182.2-3"/>
    <property type="match status" value="1"/>
</dbReference>
<dbReference type="NCBIfam" id="NF003519">
    <property type="entry name" value="PRK05182.2-5"/>
    <property type="match status" value="1"/>
</dbReference>
<dbReference type="NCBIfam" id="TIGR02027">
    <property type="entry name" value="rpoA"/>
    <property type="match status" value="1"/>
</dbReference>
<dbReference type="Pfam" id="PF01000">
    <property type="entry name" value="RNA_pol_A_bac"/>
    <property type="match status" value="1"/>
</dbReference>
<dbReference type="Pfam" id="PF03118">
    <property type="entry name" value="RNA_pol_A_CTD"/>
    <property type="match status" value="1"/>
</dbReference>
<dbReference type="Pfam" id="PF01193">
    <property type="entry name" value="RNA_pol_L"/>
    <property type="match status" value="1"/>
</dbReference>
<dbReference type="SMART" id="SM00662">
    <property type="entry name" value="RPOLD"/>
    <property type="match status" value="1"/>
</dbReference>
<dbReference type="SUPFAM" id="SSF47789">
    <property type="entry name" value="C-terminal domain of RNA polymerase alpha subunit"/>
    <property type="match status" value="1"/>
</dbReference>
<dbReference type="SUPFAM" id="SSF56553">
    <property type="entry name" value="Insert subdomain of RNA polymerase alpha subunit"/>
    <property type="match status" value="1"/>
</dbReference>
<dbReference type="SUPFAM" id="SSF55257">
    <property type="entry name" value="RBP11-like subunits of RNA polymerase"/>
    <property type="match status" value="1"/>
</dbReference>
<protein>
    <recommendedName>
        <fullName evidence="1">DNA-directed RNA polymerase subunit alpha</fullName>
        <shortName evidence="1">RNAP subunit alpha</shortName>
        <ecNumber evidence="1">2.7.7.6</ecNumber>
    </recommendedName>
    <alternativeName>
        <fullName evidence="1">RNA polymerase subunit alpha</fullName>
    </alternativeName>
    <alternativeName>
        <fullName evidence="1">Transcriptase subunit alpha</fullName>
    </alternativeName>
</protein>
<accession>A8ETK6</accession>
<evidence type="ECO:0000255" key="1">
    <source>
        <dbReference type="HAMAP-Rule" id="MF_00059"/>
    </source>
</evidence>
<name>RPOA_ALIB4</name>
<feature type="chain" id="PRO_0000323616" description="DNA-directed RNA polymerase subunit alpha">
    <location>
        <begin position="1"/>
        <end position="332"/>
    </location>
</feature>
<feature type="region of interest" description="Alpha N-terminal domain (alpha-NTD)" evidence="1">
    <location>
        <begin position="1"/>
        <end position="227"/>
    </location>
</feature>
<feature type="region of interest" description="Alpha C-terminal domain (alpha-CTD)" evidence="1">
    <location>
        <begin position="248"/>
        <end position="332"/>
    </location>
</feature>
<sequence>MKKFAETPFLPTEVEIEAISDNEAKISAYPFEDGFAITLAHPLRRLLLSSSVGCAPIAVKIEGASHEFDSLRGMLEDVAIFVINLKNIKFKINGDKEQVVVEYSFNGPRDIKGEDLINSEVDVVSKDAHLATINSDCNLTFSVILQKGIGYMPSEDIRDIVGADYIPIDAFFTPVKKVVYDIEKMLVEDNPNYEKAVFRVQTNGQISPVTAFKEAVSVMYSQMSVFNKVFDLSEVAVSDSGEEPVELKELVIRIDDLNLSARSFNSLDRAGLKYLGELVLMSEVEVKNIKNLGKKSYDEIAEKLESLGYPVENTLPENVASALRRKLEQLKA</sequence>